<name>ARGB_CLOK5</name>
<reference key="1">
    <citation type="journal article" date="2008" name="Proc. Natl. Acad. Sci. U.S.A.">
        <title>The genome of Clostridium kluyveri, a strict anaerobe with unique metabolic features.</title>
        <authorList>
            <person name="Seedorf H."/>
            <person name="Fricke W.F."/>
            <person name="Veith B."/>
            <person name="Brueggemann H."/>
            <person name="Liesegang H."/>
            <person name="Strittmatter A."/>
            <person name="Miethke M."/>
            <person name="Buckel W."/>
            <person name="Hinderberger J."/>
            <person name="Li F."/>
            <person name="Hagemeier C."/>
            <person name="Thauer R.K."/>
            <person name="Gottschalk G."/>
        </authorList>
    </citation>
    <scope>NUCLEOTIDE SEQUENCE [LARGE SCALE GENOMIC DNA]</scope>
    <source>
        <strain>ATCC 8527 / DSM 555 / NBRC 12016 / NCIMB 10680 / K1</strain>
    </source>
</reference>
<gene>
    <name evidence="1" type="primary">argB</name>
    <name type="ordered locus">CKL_1555</name>
</gene>
<proteinExistence type="inferred from homology"/>
<keyword id="KW-0028">Amino-acid biosynthesis</keyword>
<keyword id="KW-0055">Arginine biosynthesis</keyword>
<keyword id="KW-0067">ATP-binding</keyword>
<keyword id="KW-0963">Cytoplasm</keyword>
<keyword id="KW-0418">Kinase</keyword>
<keyword id="KW-0547">Nucleotide-binding</keyword>
<keyword id="KW-1185">Reference proteome</keyword>
<keyword id="KW-0808">Transferase</keyword>
<comment type="function">
    <text evidence="1">Catalyzes the ATP-dependent phosphorylation of N-acetyl-L-glutamate.</text>
</comment>
<comment type="catalytic activity">
    <reaction evidence="1">
        <text>N-acetyl-L-glutamate + ATP = N-acetyl-L-glutamyl 5-phosphate + ADP</text>
        <dbReference type="Rhea" id="RHEA:14629"/>
        <dbReference type="ChEBI" id="CHEBI:30616"/>
        <dbReference type="ChEBI" id="CHEBI:44337"/>
        <dbReference type="ChEBI" id="CHEBI:57936"/>
        <dbReference type="ChEBI" id="CHEBI:456216"/>
        <dbReference type="EC" id="2.7.2.8"/>
    </reaction>
</comment>
<comment type="pathway">
    <text evidence="1">Amino-acid biosynthesis; L-arginine biosynthesis; N(2)-acetyl-L-ornithine from L-glutamate: step 2/4.</text>
</comment>
<comment type="subcellular location">
    <subcellularLocation>
        <location evidence="1">Cytoplasm</location>
    </subcellularLocation>
</comment>
<comment type="similarity">
    <text evidence="1">Belongs to the acetylglutamate kinase family. ArgB subfamily.</text>
</comment>
<feature type="chain" id="PRO_1000075308" description="Acetylglutamate kinase">
    <location>
        <begin position="1"/>
        <end position="283"/>
    </location>
</feature>
<feature type="binding site" evidence="1">
    <location>
        <begin position="63"/>
        <end position="64"/>
    </location>
    <ligand>
        <name>substrate</name>
    </ligand>
</feature>
<feature type="binding site" evidence="1">
    <location>
        <position position="85"/>
    </location>
    <ligand>
        <name>substrate</name>
    </ligand>
</feature>
<feature type="binding site" evidence="1">
    <location>
        <position position="179"/>
    </location>
    <ligand>
        <name>substrate</name>
    </ligand>
</feature>
<feature type="site" description="Transition state stabilizer" evidence="1">
    <location>
        <position position="28"/>
    </location>
</feature>
<feature type="site" description="Transition state stabilizer" evidence="1">
    <location>
        <position position="242"/>
    </location>
</feature>
<organism>
    <name type="scientific">Clostridium kluyveri (strain ATCC 8527 / DSM 555 / NBRC 12016 / NCIMB 10680 / K1)</name>
    <dbReference type="NCBI Taxonomy" id="431943"/>
    <lineage>
        <taxon>Bacteria</taxon>
        <taxon>Bacillati</taxon>
        <taxon>Bacillota</taxon>
        <taxon>Clostridia</taxon>
        <taxon>Eubacteriales</taxon>
        <taxon>Clostridiaceae</taxon>
        <taxon>Clostridium</taxon>
    </lineage>
</organism>
<dbReference type="EC" id="2.7.2.8" evidence="1"/>
<dbReference type="EMBL" id="CP000673">
    <property type="protein sequence ID" value="EDK33597.1"/>
    <property type="molecule type" value="Genomic_DNA"/>
</dbReference>
<dbReference type="RefSeq" id="WP_012101947.1">
    <property type="nucleotide sequence ID" value="NC_009706.1"/>
</dbReference>
<dbReference type="SMR" id="A5N8G6"/>
<dbReference type="STRING" id="431943.CKL_1555"/>
<dbReference type="KEGG" id="ckl:CKL_1555"/>
<dbReference type="eggNOG" id="COG0548">
    <property type="taxonomic scope" value="Bacteria"/>
</dbReference>
<dbReference type="HOGENOM" id="CLU_053680_0_0_9"/>
<dbReference type="UniPathway" id="UPA00068">
    <property type="reaction ID" value="UER00107"/>
</dbReference>
<dbReference type="Proteomes" id="UP000002411">
    <property type="component" value="Chromosome"/>
</dbReference>
<dbReference type="GO" id="GO:0005737">
    <property type="term" value="C:cytoplasm"/>
    <property type="evidence" value="ECO:0007669"/>
    <property type="project" value="UniProtKB-SubCell"/>
</dbReference>
<dbReference type="GO" id="GO:0003991">
    <property type="term" value="F:acetylglutamate kinase activity"/>
    <property type="evidence" value="ECO:0007669"/>
    <property type="project" value="UniProtKB-UniRule"/>
</dbReference>
<dbReference type="GO" id="GO:0005524">
    <property type="term" value="F:ATP binding"/>
    <property type="evidence" value="ECO:0007669"/>
    <property type="project" value="UniProtKB-UniRule"/>
</dbReference>
<dbReference type="GO" id="GO:0042450">
    <property type="term" value="P:arginine biosynthetic process via ornithine"/>
    <property type="evidence" value="ECO:0007669"/>
    <property type="project" value="UniProtKB-UniRule"/>
</dbReference>
<dbReference type="GO" id="GO:0006526">
    <property type="term" value="P:L-arginine biosynthetic process"/>
    <property type="evidence" value="ECO:0007669"/>
    <property type="project" value="UniProtKB-UniPathway"/>
</dbReference>
<dbReference type="CDD" id="cd04250">
    <property type="entry name" value="AAK_NAGK-C"/>
    <property type="match status" value="1"/>
</dbReference>
<dbReference type="FunFam" id="3.40.1160.10:FF:000004">
    <property type="entry name" value="Acetylglutamate kinase"/>
    <property type="match status" value="1"/>
</dbReference>
<dbReference type="Gene3D" id="3.40.1160.10">
    <property type="entry name" value="Acetylglutamate kinase-like"/>
    <property type="match status" value="1"/>
</dbReference>
<dbReference type="HAMAP" id="MF_00082">
    <property type="entry name" value="ArgB"/>
    <property type="match status" value="1"/>
</dbReference>
<dbReference type="InterPro" id="IPR036393">
    <property type="entry name" value="AceGlu_kinase-like_sf"/>
</dbReference>
<dbReference type="InterPro" id="IPR004662">
    <property type="entry name" value="AcgluKinase_fam"/>
</dbReference>
<dbReference type="InterPro" id="IPR037528">
    <property type="entry name" value="ArgB"/>
</dbReference>
<dbReference type="InterPro" id="IPR001048">
    <property type="entry name" value="Asp/Glu/Uridylate_kinase"/>
</dbReference>
<dbReference type="InterPro" id="IPR001057">
    <property type="entry name" value="Glu/AcGlu_kinase"/>
</dbReference>
<dbReference type="InterPro" id="IPR041727">
    <property type="entry name" value="NAGK-C"/>
</dbReference>
<dbReference type="NCBIfam" id="TIGR00761">
    <property type="entry name" value="argB"/>
    <property type="match status" value="1"/>
</dbReference>
<dbReference type="PANTHER" id="PTHR23342">
    <property type="entry name" value="N-ACETYLGLUTAMATE SYNTHASE"/>
    <property type="match status" value="1"/>
</dbReference>
<dbReference type="PANTHER" id="PTHR23342:SF0">
    <property type="entry name" value="N-ACETYLGLUTAMATE SYNTHASE, MITOCHONDRIAL"/>
    <property type="match status" value="1"/>
</dbReference>
<dbReference type="Pfam" id="PF00696">
    <property type="entry name" value="AA_kinase"/>
    <property type="match status" value="1"/>
</dbReference>
<dbReference type="PIRSF" id="PIRSF000728">
    <property type="entry name" value="NAGK"/>
    <property type="match status" value="1"/>
</dbReference>
<dbReference type="PRINTS" id="PR00474">
    <property type="entry name" value="GLU5KINASE"/>
</dbReference>
<dbReference type="SUPFAM" id="SSF53633">
    <property type="entry name" value="Carbamate kinase-like"/>
    <property type="match status" value="1"/>
</dbReference>
<protein>
    <recommendedName>
        <fullName evidence="1">Acetylglutamate kinase</fullName>
        <ecNumber evidence="1">2.7.2.8</ecNumber>
    </recommendedName>
    <alternativeName>
        <fullName evidence="1">N-acetyl-L-glutamate 5-phosphotransferase</fullName>
    </alternativeName>
    <alternativeName>
        <fullName evidence="1">NAG kinase</fullName>
        <shortName evidence="1">NAGK</shortName>
    </alternativeName>
</protein>
<accession>A5N8G6</accession>
<sequence length="283" mass="30859">MNYNEVAKILAESLPYIQKYRGKTIVVKYGGSAMLDEQLKKYVINDLVLMKCVGINLVVVHGGGPFISSYLKKLNKESVFIDGLRYTDEETMDVVQMVLSGKVNKDLVKLIQSYGGKALGLCGIDGAMIKAEKISKGVDLGKVGEITDINTEIIISSIDNGYIPVISSIALGDDNETYNINADTCTFKIAAALKAQNLILLTDVPGVMRDMDDNSTLISELRLKDIKALYEDNIIKGGMLPKINCCVEAIKSGVKSAHIIDGRVPHCLLVELFSKEGIGTMIY</sequence>
<evidence type="ECO:0000255" key="1">
    <source>
        <dbReference type="HAMAP-Rule" id="MF_00082"/>
    </source>
</evidence>